<keyword id="KW-0175">Coiled coil</keyword>
<keyword id="KW-0963">Cytoplasm</keyword>
<keyword id="KW-0206">Cytoskeleton</keyword>
<keyword id="KW-0597">Phosphoprotein</keyword>
<keyword id="KW-1185">Reference proteome</keyword>
<dbReference type="EMBL" id="AK076400">
    <property type="protein sequence ID" value="BAC36324.1"/>
    <property type="molecule type" value="mRNA"/>
</dbReference>
<dbReference type="EMBL" id="AL593847">
    <property type="status" value="NOT_ANNOTATED_CDS"/>
    <property type="molecule type" value="Genomic_DNA"/>
</dbReference>
<dbReference type="EMBL" id="AL603664">
    <property type="status" value="NOT_ANNOTATED_CDS"/>
    <property type="molecule type" value="Genomic_DNA"/>
</dbReference>
<dbReference type="EMBL" id="CH466558">
    <property type="protein sequence ID" value="EDL34315.1"/>
    <property type="molecule type" value="Genomic_DNA"/>
</dbReference>
<dbReference type="CCDS" id="CCDS25563.1"/>
<dbReference type="RefSeq" id="NP_796062.2">
    <property type="nucleotide sequence ID" value="NM_177088.3"/>
</dbReference>
<dbReference type="SMR" id="Q8BVV7"/>
<dbReference type="BioGRID" id="235807">
    <property type="interactions" value="1"/>
</dbReference>
<dbReference type="FunCoup" id="Q8BVV7">
    <property type="interactions" value="1113"/>
</dbReference>
<dbReference type="STRING" id="10090.ENSMUSP00000018516"/>
<dbReference type="iPTMnet" id="Q8BVV7"/>
<dbReference type="PhosphoSitePlus" id="Q8BVV7"/>
<dbReference type="PaxDb" id="10090-ENSMUSP00000018516"/>
<dbReference type="ProteomicsDB" id="283887"/>
<dbReference type="Antibodypedia" id="67088">
    <property type="antibodies" value="80 antibodies from 20 providers"/>
</dbReference>
<dbReference type="Ensembl" id="ENSMUST00000018516.11">
    <property type="protein sequence ID" value="ENSMUSP00000018516.5"/>
    <property type="gene ID" value="ENSMUSG00000018372.14"/>
</dbReference>
<dbReference type="GeneID" id="320162"/>
<dbReference type="KEGG" id="mmu:320162"/>
<dbReference type="UCSC" id="uc007lzu.2">
    <property type="organism name" value="mouse"/>
</dbReference>
<dbReference type="AGR" id="MGI:2443502"/>
<dbReference type="CTD" id="90799"/>
<dbReference type="MGI" id="MGI:2443502">
    <property type="gene designation" value="Cep95"/>
</dbReference>
<dbReference type="VEuPathDB" id="HostDB:ENSMUSG00000018372"/>
<dbReference type="eggNOG" id="ENOG502QTFE">
    <property type="taxonomic scope" value="Eukaryota"/>
</dbReference>
<dbReference type="GeneTree" id="ENSGT00390000005412"/>
<dbReference type="InParanoid" id="Q8BVV7"/>
<dbReference type="OMA" id="KHSQPWK"/>
<dbReference type="OrthoDB" id="545730at2759"/>
<dbReference type="PhylomeDB" id="Q8BVV7"/>
<dbReference type="TreeFam" id="TF333224"/>
<dbReference type="BioGRID-ORCS" id="320162">
    <property type="hits" value="8 hits in 78 CRISPR screens"/>
</dbReference>
<dbReference type="ChiTaRS" id="Cep95">
    <property type="organism name" value="mouse"/>
</dbReference>
<dbReference type="PRO" id="PR:Q8BVV7"/>
<dbReference type="Proteomes" id="UP000000589">
    <property type="component" value="Chromosome 11"/>
</dbReference>
<dbReference type="RNAct" id="Q8BVV7">
    <property type="molecule type" value="protein"/>
</dbReference>
<dbReference type="Bgee" id="ENSMUSG00000018372">
    <property type="expression patterns" value="Expressed in undifferentiated genital tubercle and 199 other cell types or tissues"/>
</dbReference>
<dbReference type="ExpressionAtlas" id="Q8BVV7">
    <property type="expression patterns" value="baseline and differential"/>
</dbReference>
<dbReference type="GO" id="GO:0005813">
    <property type="term" value="C:centrosome"/>
    <property type="evidence" value="ECO:0000250"/>
    <property type="project" value="UniProtKB"/>
</dbReference>
<dbReference type="GO" id="GO:0005737">
    <property type="term" value="C:cytoplasm"/>
    <property type="evidence" value="ECO:0007669"/>
    <property type="project" value="UniProtKB-KW"/>
</dbReference>
<dbReference type="GO" id="GO:0000922">
    <property type="term" value="C:spindle pole"/>
    <property type="evidence" value="ECO:0000250"/>
    <property type="project" value="UniProtKB"/>
</dbReference>
<dbReference type="Gene3D" id="1.10.418.10">
    <property type="entry name" value="Calponin-like domain"/>
    <property type="match status" value="1"/>
</dbReference>
<dbReference type="InterPro" id="IPR026619">
    <property type="entry name" value="CEP95"/>
</dbReference>
<dbReference type="InterPro" id="IPR036872">
    <property type="entry name" value="CH_dom_sf"/>
</dbReference>
<dbReference type="InterPro" id="IPR044039">
    <property type="entry name" value="DUF5745"/>
</dbReference>
<dbReference type="PANTHER" id="PTHR22545">
    <property type="entry name" value="CENTROSOMAL PROTEIN OF 95 KDA"/>
    <property type="match status" value="1"/>
</dbReference>
<dbReference type="PANTHER" id="PTHR22545:SF0">
    <property type="entry name" value="CENTROSOMAL PROTEIN OF 95 KDA"/>
    <property type="match status" value="1"/>
</dbReference>
<dbReference type="Pfam" id="PF19016">
    <property type="entry name" value="DUF5745"/>
    <property type="match status" value="1"/>
</dbReference>
<organism>
    <name type="scientific">Mus musculus</name>
    <name type="common">Mouse</name>
    <dbReference type="NCBI Taxonomy" id="10090"/>
    <lineage>
        <taxon>Eukaryota</taxon>
        <taxon>Metazoa</taxon>
        <taxon>Chordata</taxon>
        <taxon>Craniata</taxon>
        <taxon>Vertebrata</taxon>
        <taxon>Euteleostomi</taxon>
        <taxon>Mammalia</taxon>
        <taxon>Eutheria</taxon>
        <taxon>Euarchontoglires</taxon>
        <taxon>Glires</taxon>
        <taxon>Rodentia</taxon>
        <taxon>Myomorpha</taxon>
        <taxon>Muroidea</taxon>
        <taxon>Muridae</taxon>
        <taxon>Murinae</taxon>
        <taxon>Mus</taxon>
        <taxon>Mus</taxon>
    </lineage>
</organism>
<evidence type="ECO:0000250" key="1"/>
<evidence type="ECO:0000250" key="2">
    <source>
        <dbReference type="UniProtKB" id="Q96GE4"/>
    </source>
</evidence>
<evidence type="ECO:0000255" key="3"/>
<evidence type="ECO:0000256" key="4">
    <source>
        <dbReference type="SAM" id="MobiDB-lite"/>
    </source>
</evidence>
<evidence type="ECO:0000305" key="5"/>
<evidence type="ECO:0007744" key="6">
    <source>
    </source>
</evidence>
<name>CEP95_MOUSE</name>
<protein>
    <recommendedName>
        <fullName>Centrosomal protein of 95 kDa</fullName>
        <shortName>Cep95</shortName>
    </recommendedName>
    <alternativeName>
        <fullName>Coiled-coil domain-containing protein 45</fullName>
    </alternativeName>
</protein>
<proteinExistence type="evidence at protein level"/>
<accession>Q8BVV7</accession>
<accession>A2A5Z8</accession>
<gene>
    <name type="primary">Cep95</name>
    <name type="synonym">Ccdc45</name>
</gene>
<sequence length="827" mass="95210">MASSEAEWVTIANNLLFKCHIHLRIHELQDCDANVFIALYQSILGEKVPDLIVLPRNQEDEAHNVQAVIDSLALDYLQVSLSHITGENIVKGDNESIRNLLEIFDGLLDYLTEHISESSPNKSETEQYSKDSHGEEAGEDLERTEEAKWRNASFMRCSFSSDTLGPTWDEDEAESTGEIIRLGDTAHTFSQRSNGAQNSKDLRSRKASASPGVEPPEEMLNPGPLGFLSQNGPPCEAASETPPMSMVPSARKLGEPIRAAIPLHPPYHPSEPRAPCPIGKEYLWSSRYLSTPTSGEHMAPSVEPDDAFLTSTLFKDDDQETYLPKPEATRTRKPSKGERDENRAAIPSEHLPFSQKARKPLTEQELHAMSEKLSQRLSELDWMLKTALGDRGTGETDGNDGDGGGEEVRSGNEEMLSQHSDSVMEYGPKKPRPGFSTCRKAPYRSHSLSPSSVNKHRQLEKEKKRQHKSKGTDSCHFQAKALTEAFERELRKHKVQENVGLRGIREEEEEEEETGKSYREVVPKGTSKRSQVQKTYSRKTAAPSPKGDGRLKSSKASPMKVSEHSLLSLMLEQFPFLYVSDPTLTKMWKQQMAQVEQLKREAQRENRSKKKLQDEIEEALRRHDLLTALVKKEYDHNKRLQDFRDRIQRQRLTQSKIKENRHQSVRARKYYDDYRVQLRAKMMKMRTREEMIFKKLFEEGLQIQKQRLRDLRNYAKEKRNEEKRQHQNELDSMENHYKDQFSLLAEAISQERQELKVRQKFQAQTLHKVKRELRAKMEKEIQQLQHMITQNDDDAFFRELEAERFKARLQLASFQYSKNPFPRGQTS</sequence>
<reference key="1">
    <citation type="journal article" date="2005" name="Science">
        <title>The transcriptional landscape of the mammalian genome.</title>
        <authorList>
            <person name="Carninci P."/>
            <person name="Kasukawa T."/>
            <person name="Katayama S."/>
            <person name="Gough J."/>
            <person name="Frith M.C."/>
            <person name="Maeda N."/>
            <person name="Oyama R."/>
            <person name="Ravasi T."/>
            <person name="Lenhard B."/>
            <person name="Wells C."/>
            <person name="Kodzius R."/>
            <person name="Shimokawa K."/>
            <person name="Bajic V.B."/>
            <person name="Brenner S.E."/>
            <person name="Batalov S."/>
            <person name="Forrest A.R."/>
            <person name="Zavolan M."/>
            <person name="Davis M.J."/>
            <person name="Wilming L.G."/>
            <person name="Aidinis V."/>
            <person name="Allen J.E."/>
            <person name="Ambesi-Impiombato A."/>
            <person name="Apweiler R."/>
            <person name="Aturaliya R.N."/>
            <person name="Bailey T.L."/>
            <person name="Bansal M."/>
            <person name="Baxter L."/>
            <person name="Beisel K.W."/>
            <person name="Bersano T."/>
            <person name="Bono H."/>
            <person name="Chalk A.M."/>
            <person name="Chiu K.P."/>
            <person name="Choudhary V."/>
            <person name="Christoffels A."/>
            <person name="Clutterbuck D.R."/>
            <person name="Crowe M.L."/>
            <person name="Dalla E."/>
            <person name="Dalrymple B.P."/>
            <person name="de Bono B."/>
            <person name="Della Gatta G."/>
            <person name="di Bernardo D."/>
            <person name="Down T."/>
            <person name="Engstrom P."/>
            <person name="Fagiolini M."/>
            <person name="Faulkner G."/>
            <person name="Fletcher C.F."/>
            <person name="Fukushima T."/>
            <person name="Furuno M."/>
            <person name="Futaki S."/>
            <person name="Gariboldi M."/>
            <person name="Georgii-Hemming P."/>
            <person name="Gingeras T.R."/>
            <person name="Gojobori T."/>
            <person name="Green R.E."/>
            <person name="Gustincich S."/>
            <person name="Harbers M."/>
            <person name="Hayashi Y."/>
            <person name="Hensch T.K."/>
            <person name="Hirokawa N."/>
            <person name="Hill D."/>
            <person name="Huminiecki L."/>
            <person name="Iacono M."/>
            <person name="Ikeo K."/>
            <person name="Iwama A."/>
            <person name="Ishikawa T."/>
            <person name="Jakt M."/>
            <person name="Kanapin A."/>
            <person name="Katoh M."/>
            <person name="Kawasawa Y."/>
            <person name="Kelso J."/>
            <person name="Kitamura H."/>
            <person name="Kitano H."/>
            <person name="Kollias G."/>
            <person name="Krishnan S.P."/>
            <person name="Kruger A."/>
            <person name="Kummerfeld S.K."/>
            <person name="Kurochkin I.V."/>
            <person name="Lareau L.F."/>
            <person name="Lazarevic D."/>
            <person name="Lipovich L."/>
            <person name="Liu J."/>
            <person name="Liuni S."/>
            <person name="McWilliam S."/>
            <person name="Madan Babu M."/>
            <person name="Madera M."/>
            <person name="Marchionni L."/>
            <person name="Matsuda H."/>
            <person name="Matsuzawa S."/>
            <person name="Miki H."/>
            <person name="Mignone F."/>
            <person name="Miyake S."/>
            <person name="Morris K."/>
            <person name="Mottagui-Tabar S."/>
            <person name="Mulder N."/>
            <person name="Nakano N."/>
            <person name="Nakauchi H."/>
            <person name="Ng P."/>
            <person name="Nilsson R."/>
            <person name="Nishiguchi S."/>
            <person name="Nishikawa S."/>
            <person name="Nori F."/>
            <person name="Ohara O."/>
            <person name="Okazaki Y."/>
            <person name="Orlando V."/>
            <person name="Pang K.C."/>
            <person name="Pavan W.J."/>
            <person name="Pavesi G."/>
            <person name="Pesole G."/>
            <person name="Petrovsky N."/>
            <person name="Piazza S."/>
            <person name="Reed J."/>
            <person name="Reid J.F."/>
            <person name="Ring B.Z."/>
            <person name="Ringwald M."/>
            <person name="Rost B."/>
            <person name="Ruan Y."/>
            <person name="Salzberg S.L."/>
            <person name="Sandelin A."/>
            <person name="Schneider C."/>
            <person name="Schoenbach C."/>
            <person name="Sekiguchi K."/>
            <person name="Semple C.A."/>
            <person name="Seno S."/>
            <person name="Sessa L."/>
            <person name="Sheng Y."/>
            <person name="Shibata Y."/>
            <person name="Shimada H."/>
            <person name="Shimada K."/>
            <person name="Silva D."/>
            <person name="Sinclair B."/>
            <person name="Sperling S."/>
            <person name="Stupka E."/>
            <person name="Sugiura K."/>
            <person name="Sultana R."/>
            <person name="Takenaka Y."/>
            <person name="Taki K."/>
            <person name="Tammoja K."/>
            <person name="Tan S.L."/>
            <person name="Tang S."/>
            <person name="Taylor M.S."/>
            <person name="Tegner J."/>
            <person name="Teichmann S.A."/>
            <person name="Ueda H.R."/>
            <person name="van Nimwegen E."/>
            <person name="Verardo R."/>
            <person name="Wei C.L."/>
            <person name="Yagi K."/>
            <person name="Yamanishi H."/>
            <person name="Zabarovsky E."/>
            <person name="Zhu S."/>
            <person name="Zimmer A."/>
            <person name="Hide W."/>
            <person name="Bult C."/>
            <person name="Grimmond S.M."/>
            <person name="Teasdale R.D."/>
            <person name="Liu E.T."/>
            <person name="Brusic V."/>
            <person name="Quackenbush J."/>
            <person name="Wahlestedt C."/>
            <person name="Mattick J.S."/>
            <person name="Hume D.A."/>
            <person name="Kai C."/>
            <person name="Sasaki D."/>
            <person name="Tomaru Y."/>
            <person name="Fukuda S."/>
            <person name="Kanamori-Katayama M."/>
            <person name="Suzuki M."/>
            <person name="Aoki J."/>
            <person name="Arakawa T."/>
            <person name="Iida J."/>
            <person name="Imamura K."/>
            <person name="Itoh M."/>
            <person name="Kato T."/>
            <person name="Kawaji H."/>
            <person name="Kawagashira N."/>
            <person name="Kawashima T."/>
            <person name="Kojima M."/>
            <person name="Kondo S."/>
            <person name="Konno H."/>
            <person name="Nakano K."/>
            <person name="Ninomiya N."/>
            <person name="Nishio T."/>
            <person name="Okada M."/>
            <person name="Plessy C."/>
            <person name="Shibata K."/>
            <person name="Shiraki T."/>
            <person name="Suzuki S."/>
            <person name="Tagami M."/>
            <person name="Waki K."/>
            <person name="Watahiki A."/>
            <person name="Okamura-Oho Y."/>
            <person name="Suzuki H."/>
            <person name="Kawai J."/>
            <person name="Hayashizaki Y."/>
        </authorList>
    </citation>
    <scope>NUCLEOTIDE SEQUENCE [LARGE SCALE MRNA]</scope>
    <source>
        <strain>C57BL/6J</strain>
        <tissue>Skin</tissue>
    </source>
</reference>
<reference key="2">
    <citation type="journal article" date="2009" name="PLoS Biol.">
        <title>Lineage-specific biology revealed by a finished genome assembly of the mouse.</title>
        <authorList>
            <person name="Church D.M."/>
            <person name="Goodstadt L."/>
            <person name="Hillier L.W."/>
            <person name="Zody M.C."/>
            <person name="Goldstein S."/>
            <person name="She X."/>
            <person name="Bult C.J."/>
            <person name="Agarwala R."/>
            <person name="Cherry J.L."/>
            <person name="DiCuccio M."/>
            <person name="Hlavina W."/>
            <person name="Kapustin Y."/>
            <person name="Meric P."/>
            <person name="Maglott D."/>
            <person name="Birtle Z."/>
            <person name="Marques A.C."/>
            <person name="Graves T."/>
            <person name="Zhou S."/>
            <person name="Teague B."/>
            <person name="Potamousis K."/>
            <person name="Churas C."/>
            <person name="Place M."/>
            <person name="Herschleb J."/>
            <person name="Runnheim R."/>
            <person name="Forrest D."/>
            <person name="Amos-Landgraf J."/>
            <person name="Schwartz D.C."/>
            <person name="Cheng Z."/>
            <person name="Lindblad-Toh K."/>
            <person name="Eichler E.E."/>
            <person name="Ponting C.P."/>
        </authorList>
    </citation>
    <scope>NUCLEOTIDE SEQUENCE [LARGE SCALE GENOMIC DNA]</scope>
    <source>
        <strain>C57BL/6J</strain>
    </source>
</reference>
<reference key="3">
    <citation type="submission" date="2005-07" db="EMBL/GenBank/DDBJ databases">
        <authorList>
            <person name="Mural R.J."/>
            <person name="Adams M.D."/>
            <person name="Myers E.W."/>
            <person name="Smith H.O."/>
            <person name="Venter J.C."/>
        </authorList>
    </citation>
    <scope>NUCLEOTIDE SEQUENCE [LARGE SCALE GENOMIC DNA]</scope>
</reference>
<reference key="4">
    <citation type="journal article" date="2010" name="Cell">
        <title>A tissue-specific atlas of mouse protein phosphorylation and expression.</title>
        <authorList>
            <person name="Huttlin E.L."/>
            <person name="Jedrychowski M.P."/>
            <person name="Elias J.E."/>
            <person name="Goswami T."/>
            <person name="Rad R."/>
            <person name="Beausoleil S.A."/>
            <person name="Villen J."/>
            <person name="Haas W."/>
            <person name="Sowa M.E."/>
            <person name="Gygi S.P."/>
        </authorList>
    </citation>
    <scope>PHOSPHORYLATION [LARGE SCALE ANALYSIS] AT SER-447</scope>
    <scope>IDENTIFICATION BY MASS SPECTROMETRY [LARGE SCALE ANALYSIS]</scope>
    <source>
        <tissue>Testis</tissue>
    </source>
</reference>
<comment type="subcellular location">
    <subcellularLocation>
        <location evidence="1">Cytoplasm</location>
        <location evidence="1">Cytoskeleton</location>
        <location evidence="1">Microtubule organizing center</location>
        <location evidence="1">Centrosome</location>
    </subcellularLocation>
    <subcellularLocation>
        <location evidence="1">Cytoplasm</location>
        <location evidence="1">Cytoskeleton</location>
        <location evidence="1">Spindle pole</location>
    </subcellularLocation>
</comment>
<feature type="chain" id="PRO_0000234506" description="Centrosomal protein of 95 kDa">
    <location>
        <begin position="1"/>
        <end position="827"/>
    </location>
</feature>
<feature type="region of interest" description="Disordered" evidence="4">
    <location>
        <begin position="115"/>
        <end position="145"/>
    </location>
</feature>
<feature type="region of interest" description="Disordered" evidence="4">
    <location>
        <begin position="183"/>
        <end position="249"/>
    </location>
</feature>
<feature type="region of interest" description="Disordered" evidence="4">
    <location>
        <begin position="308"/>
        <end position="372"/>
    </location>
</feature>
<feature type="region of interest" description="Disordered" evidence="4">
    <location>
        <begin position="388"/>
        <end position="476"/>
    </location>
</feature>
<feature type="region of interest" description="Disordered" evidence="4">
    <location>
        <begin position="489"/>
        <end position="558"/>
    </location>
</feature>
<feature type="coiled-coil region" evidence="3">
    <location>
        <begin position="584"/>
        <end position="633"/>
    </location>
</feature>
<feature type="coiled-coil region" evidence="3">
    <location>
        <begin position="701"/>
        <end position="795"/>
    </location>
</feature>
<feature type="compositionally biased region" description="Basic and acidic residues" evidence="4">
    <location>
        <begin position="123"/>
        <end position="145"/>
    </location>
</feature>
<feature type="compositionally biased region" description="Polar residues" evidence="4">
    <location>
        <begin position="187"/>
        <end position="199"/>
    </location>
</feature>
<feature type="compositionally biased region" description="Basic and acidic residues" evidence="4">
    <location>
        <begin position="327"/>
        <end position="343"/>
    </location>
</feature>
<feature type="compositionally biased region" description="Basic and acidic residues" evidence="4">
    <location>
        <begin position="360"/>
        <end position="372"/>
    </location>
</feature>
<feature type="modified residue" description="Phosphoserine" evidence="6">
    <location>
        <position position="447"/>
    </location>
</feature>
<feature type="modified residue" description="Phosphoserine" evidence="2">
    <location>
        <position position="449"/>
    </location>
</feature>
<feature type="modified residue" description="Phosphoserine" evidence="2">
    <location>
        <position position="451"/>
    </location>
</feature>
<feature type="sequence conflict" description="In Ref. 1; BAC36324." evidence="5" ref="1">
    <original>N</original>
    <variation>D</variation>
    <location>
        <position position="412"/>
    </location>
</feature>
<feature type="sequence conflict" description="In Ref. 1; BAC36324." evidence="5" ref="1">
    <original>H</original>
    <variation>N</variation>
    <location>
        <position position="456"/>
    </location>
</feature>
<feature type="sequence conflict" description="In Ref. 1; BAC36324." evidence="5" ref="1">
    <original>Q</original>
    <variation>P</variation>
    <location>
        <position position="663"/>
    </location>
</feature>